<protein>
    <recommendedName>
        <fullName evidence="1">Urease accessory protein UreG 2</fullName>
    </recommendedName>
</protein>
<gene>
    <name evidence="1" type="primary">ureG2</name>
    <name type="ordered locus">Mpop_5119</name>
</gene>
<feature type="chain" id="PRO_0000347404" description="Urease accessory protein UreG 2">
    <location>
        <begin position="1"/>
        <end position="215"/>
    </location>
</feature>
<feature type="binding site" evidence="1">
    <location>
        <begin position="11"/>
        <end position="18"/>
    </location>
    <ligand>
        <name>GTP</name>
        <dbReference type="ChEBI" id="CHEBI:37565"/>
    </ligand>
</feature>
<proteinExistence type="inferred from homology"/>
<reference key="1">
    <citation type="submission" date="2008-04" db="EMBL/GenBank/DDBJ databases">
        <title>Complete sequence of chromosome of Methylobacterium populi BJ001.</title>
        <authorList>
            <consortium name="US DOE Joint Genome Institute"/>
            <person name="Copeland A."/>
            <person name="Lucas S."/>
            <person name="Lapidus A."/>
            <person name="Glavina del Rio T."/>
            <person name="Dalin E."/>
            <person name="Tice H."/>
            <person name="Bruce D."/>
            <person name="Goodwin L."/>
            <person name="Pitluck S."/>
            <person name="Chertkov O."/>
            <person name="Brettin T."/>
            <person name="Detter J.C."/>
            <person name="Han C."/>
            <person name="Kuske C.R."/>
            <person name="Schmutz J."/>
            <person name="Larimer F."/>
            <person name="Land M."/>
            <person name="Hauser L."/>
            <person name="Kyrpides N."/>
            <person name="Mikhailova N."/>
            <person name="Marx C."/>
            <person name="Richardson P."/>
        </authorList>
    </citation>
    <scope>NUCLEOTIDE SEQUENCE [LARGE SCALE GENOMIC DNA]</scope>
    <source>
        <strain>ATCC BAA-705 / NCIMB 13946 / BJ001</strain>
    </source>
</reference>
<keyword id="KW-0143">Chaperone</keyword>
<keyword id="KW-0963">Cytoplasm</keyword>
<keyword id="KW-0342">GTP-binding</keyword>
<keyword id="KW-0996">Nickel insertion</keyword>
<keyword id="KW-0547">Nucleotide-binding</keyword>
<comment type="function">
    <text evidence="1">Facilitates the functional incorporation of the urease nickel metallocenter. This process requires GTP hydrolysis, probably effectuated by UreG.</text>
</comment>
<comment type="subunit">
    <text evidence="1">Homodimer. UreD, UreF and UreG form a complex that acts as a GTP-hydrolysis-dependent molecular chaperone, activating the urease apoprotein by helping to assemble the nickel containing metallocenter of UreC. The UreE protein probably delivers the nickel.</text>
</comment>
<comment type="subcellular location">
    <subcellularLocation>
        <location evidence="1">Cytoplasm</location>
    </subcellularLocation>
</comment>
<comment type="similarity">
    <text evidence="1">Belongs to the SIMIBI class G3E GTPase family. UreG subfamily.</text>
</comment>
<dbReference type="EMBL" id="CP001029">
    <property type="protein sequence ID" value="ACB83215.1"/>
    <property type="molecule type" value="Genomic_DNA"/>
</dbReference>
<dbReference type="RefSeq" id="WP_012456811.1">
    <property type="nucleotide sequence ID" value="NC_010725.1"/>
</dbReference>
<dbReference type="SMR" id="B1Z8R3"/>
<dbReference type="STRING" id="441620.Mpop_5119"/>
<dbReference type="KEGG" id="mpo:Mpop_5119"/>
<dbReference type="eggNOG" id="COG0378">
    <property type="taxonomic scope" value="Bacteria"/>
</dbReference>
<dbReference type="HOGENOM" id="CLU_072144_1_0_5"/>
<dbReference type="OrthoDB" id="9802035at2"/>
<dbReference type="Proteomes" id="UP000007136">
    <property type="component" value="Chromosome"/>
</dbReference>
<dbReference type="GO" id="GO:0005737">
    <property type="term" value="C:cytoplasm"/>
    <property type="evidence" value="ECO:0007669"/>
    <property type="project" value="UniProtKB-SubCell"/>
</dbReference>
<dbReference type="GO" id="GO:0005525">
    <property type="term" value="F:GTP binding"/>
    <property type="evidence" value="ECO:0007669"/>
    <property type="project" value="UniProtKB-KW"/>
</dbReference>
<dbReference type="GO" id="GO:0003924">
    <property type="term" value="F:GTPase activity"/>
    <property type="evidence" value="ECO:0007669"/>
    <property type="project" value="InterPro"/>
</dbReference>
<dbReference type="GO" id="GO:0016151">
    <property type="term" value="F:nickel cation binding"/>
    <property type="evidence" value="ECO:0007669"/>
    <property type="project" value="UniProtKB-UniRule"/>
</dbReference>
<dbReference type="GO" id="GO:0043419">
    <property type="term" value="P:urea catabolic process"/>
    <property type="evidence" value="ECO:0007669"/>
    <property type="project" value="InterPro"/>
</dbReference>
<dbReference type="Gene3D" id="3.40.50.300">
    <property type="entry name" value="P-loop containing nucleotide triphosphate hydrolases"/>
    <property type="match status" value="1"/>
</dbReference>
<dbReference type="HAMAP" id="MF_01389">
    <property type="entry name" value="UreG"/>
    <property type="match status" value="1"/>
</dbReference>
<dbReference type="InterPro" id="IPR003495">
    <property type="entry name" value="CobW/HypB/UreG_nucleotide-bd"/>
</dbReference>
<dbReference type="InterPro" id="IPR027417">
    <property type="entry name" value="P-loop_NTPase"/>
</dbReference>
<dbReference type="InterPro" id="IPR004400">
    <property type="entry name" value="UreG"/>
</dbReference>
<dbReference type="NCBIfam" id="TIGR00101">
    <property type="entry name" value="ureG"/>
    <property type="match status" value="1"/>
</dbReference>
<dbReference type="PANTHER" id="PTHR31715">
    <property type="entry name" value="UREASE ACCESSORY PROTEIN G"/>
    <property type="match status" value="1"/>
</dbReference>
<dbReference type="PANTHER" id="PTHR31715:SF0">
    <property type="entry name" value="UREASE ACCESSORY PROTEIN G"/>
    <property type="match status" value="1"/>
</dbReference>
<dbReference type="Pfam" id="PF02492">
    <property type="entry name" value="cobW"/>
    <property type="match status" value="1"/>
</dbReference>
<dbReference type="PIRSF" id="PIRSF005624">
    <property type="entry name" value="Ni-bind_GTPase"/>
    <property type="match status" value="1"/>
</dbReference>
<dbReference type="SUPFAM" id="SSF52540">
    <property type="entry name" value="P-loop containing nucleoside triphosphate hydrolases"/>
    <property type="match status" value="1"/>
</dbReference>
<evidence type="ECO:0000255" key="1">
    <source>
        <dbReference type="HAMAP-Rule" id="MF_01389"/>
    </source>
</evidence>
<accession>B1Z8R3</accession>
<organism>
    <name type="scientific">Methylorubrum populi (strain ATCC BAA-705 / NCIMB 13946 / BJ001)</name>
    <name type="common">Methylobacterium populi</name>
    <dbReference type="NCBI Taxonomy" id="441620"/>
    <lineage>
        <taxon>Bacteria</taxon>
        <taxon>Pseudomonadati</taxon>
        <taxon>Pseudomonadota</taxon>
        <taxon>Alphaproteobacteria</taxon>
        <taxon>Hyphomicrobiales</taxon>
        <taxon>Methylobacteriaceae</taxon>
        <taxon>Methylorubrum</taxon>
    </lineage>
</organism>
<name>UREG2_METPB</name>
<sequence>MKKITRIGIGGPVGSGKTAVIETITPRLIERGIKPLIITNDVVTTEDAKQVRRTLNGVLIEEKIVGVETGACPHTAVREDPSMNIAAVEELEDKYPDSDVILIESGGDNLTLTFSPALADFYIYVIDVAAGDKIPRKNGAGVCQSDILVINKRDLAPYVGASLEVMARDSKIMRGKKPFLFTNCKTGEGIDDLLRLILDMALFDVTTNRPLAASA</sequence>